<protein>
    <recommendedName>
        <fullName evidence="1">Large ribosomal subunit protein bL19</fullName>
    </recommendedName>
    <alternativeName>
        <fullName evidence="2">50S ribosomal protein L19</fullName>
    </alternativeName>
</protein>
<sequence length="115" mass="13210">MSMDNIVRIIEKSQLKEVPEFRPGDTVRVHVKVKEGDKERIQAYEGVVISIRGSGISKTFTVRRISAGGIGVERIFPLYAPTIDKIEVVRRGRVRRAKLYYLRDVKGKVKIKERK</sequence>
<evidence type="ECO:0000255" key="1">
    <source>
        <dbReference type="HAMAP-Rule" id="MF_00402"/>
    </source>
</evidence>
<evidence type="ECO:0000305" key="2"/>
<keyword id="KW-1185">Reference proteome</keyword>
<keyword id="KW-0687">Ribonucleoprotein</keyword>
<keyword id="KW-0689">Ribosomal protein</keyword>
<gene>
    <name evidence="1" type="primary">rplS</name>
    <name type="ordered locus">Fnod_0651</name>
</gene>
<name>RL19_FERNB</name>
<dbReference type="EMBL" id="CP000771">
    <property type="protein sequence ID" value="ABS60506.1"/>
    <property type="molecule type" value="Genomic_DNA"/>
</dbReference>
<dbReference type="SMR" id="A7HKS3"/>
<dbReference type="STRING" id="381764.Fnod_0651"/>
<dbReference type="KEGG" id="fno:Fnod_0651"/>
<dbReference type="eggNOG" id="COG0335">
    <property type="taxonomic scope" value="Bacteria"/>
</dbReference>
<dbReference type="HOGENOM" id="CLU_103507_2_2_0"/>
<dbReference type="OrthoDB" id="9803541at2"/>
<dbReference type="Proteomes" id="UP000002415">
    <property type="component" value="Chromosome"/>
</dbReference>
<dbReference type="GO" id="GO:0022625">
    <property type="term" value="C:cytosolic large ribosomal subunit"/>
    <property type="evidence" value="ECO:0007669"/>
    <property type="project" value="TreeGrafter"/>
</dbReference>
<dbReference type="GO" id="GO:0003735">
    <property type="term" value="F:structural constituent of ribosome"/>
    <property type="evidence" value="ECO:0007669"/>
    <property type="project" value="InterPro"/>
</dbReference>
<dbReference type="GO" id="GO:0006412">
    <property type="term" value="P:translation"/>
    <property type="evidence" value="ECO:0007669"/>
    <property type="project" value="UniProtKB-UniRule"/>
</dbReference>
<dbReference type="FunFam" id="2.30.30.790:FF:000001">
    <property type="entry name" value="50S ribosomal protein L19"/>
    <property type="match status" value="1"/>
</dbReference>
<dbReference type="Gene3D" id="2.30.30.790">
    <property type="match status" value="1"/>
</dbReference>
<dbReference type="HAMAP" id="MF_00402">
    <property type="entry name" value="Ribosomal_bL19"/>
    <property type="match status" value="1"/>
</dbReference>
<dbReference type="InterPro" id="IPR001857">
    <property type="entry name" value="Ribosomal_bL19"/>
</dbReference>
<dbReference type="InterPro" id="IPR018257">
    <property type="entry name" value="Ribosomal_bL19_CS"/>
</dbReference>
<dbReference type="InterPro" id="IPR038657">
    <property type="entry name" value="Ribosomal_bL19_sf"/>
</dbReference>
<dbReference type="InterPro" id="IPR008991">
    <property type="entry name" value="Translation_prot_SH3-like_sf"/>
</dbReference>
<dbReference type="NCBIfam" id="TIGR01024">
    <property type="entry name" value="rplS_bact"/>
    <property type="match status" value="1"/>
</dbReference>
<dbReference type="PANTHER" id="PTHR15680:SF9">
    <property type="entry name" value="LARGE RIBOSOMAL SUBUNIT PROTEIN BL19M"/>
    <property type="match status" value="1"/>
</dbReference>
<dbReference type="PANTHER" id="PTHR15680">
    <property type="entry name" value="RIBOSOMAL PROTEIN L19"/>
    <property type="match status" value="1"/>
</dbReference>
<dbReference type="Pfam" id="PF01245">
    <property type="entry name" value="Ribosomal_L19"/>
    <property type="match status" value="1"/>
</dbReference>
<dbReference type="PIRSF" id="PIRSF002191">
    <property type="entry name" value="Ribosomal_L19"/>
    <property type="match status" value="1"/>
</dbReference>
<dbReference type="PRINTS" id="PR00061">
    <property type="entry name" value="RIBOSOMALL19"/>
</dbReference>
<dbReference type="SUPFAM" id="SSF50104">
    <property type="entry name" value="Translation proteins SH3-like domain"/>
    <property type="match status" value="1"/>
</dbReference>
<dbReference type="PROSITE" id="PS01015">
    <property type="entry name" value="RIBOSOMAL_L19"/>
    <property type="match status" value="1"/>
</dbReference>
<feature type="chain" id="PRO_1000072244" description="Large ribosomal subunit protein bL19">
    <location>
        <begin position="1"/>
        <end position="115"/>
    </location>
</feature>
<organism>
    <name type="scientific">Fervidobacterium nodosum (strain ATCC 35602 / DSM 5306 / Rt17-B1)</name>
    <dbReference type="NCBI Taxonomy" id="381764"/>
    <lineage>
        <taxon>Bacteria</taxon>
        <taxon>Thermotogati</taxon>
        <taxon>Thermotogota</taxon>
        <taxon>Thermotogae</taxon>
        <taxon>Thermotogales</taxon>
        <taxon>Fervidobacteriaceae</taxon>
        <taxon>Fervidobacterium</taxon>
    </lineage>
</organism>
<reference key="1">
    <citation type="submission" date="2007-07" db="EMBL/GenBank/DDBJ databases">
        <title>Complete sequence of Fervidobacterium nodosum Rt17-B1.</title>
        <authorList>
            <consortium name="US DOE Joint Genome Institute"/>
            <person name="Copeland A."/>
            <person name="Lucas S."/>
            <person name="Lapidus A."/>
            <person name="Barry K."/>
            <person name="Glavina del Rio T."/>
            <person name="Dalin E."/>
            <person name="Tice H."/>
            <person name="Pitluck S."/>
            <person name="Saunders E."/>
            <person name="Brettin T."/>
            <person name="Bruce D."/>
            <person name="Detter J.C."/>
            <person name="Han C."/>
            <person name="Schmutz J."/>
            <person name="Larimer F."/>
            <person name="Land M."/>
            <person name="Hauser L."/>
            <person name="Kyrpides N."/>
            <person name="Mikhailova N."/>
            <person name="Nelson K."/>
            <person name="Gogarten J.P."/>
            <person name="Noll K."/>
            <person name="Richardson P."/>
        </authorList>
    </citation>
    <scope>NUCLEOTIDE SEQUENCE [LARGE SCALE GENOMIC DNA]</scope>
    <source>
        <strain>ATCC 35602 / DSM 5306 / Rt17-B1</strain>
    </source>
</reference>
<proteinExistence type="inferred from homology"/>
<comment type="function">
    <text evidence="1">This protein is located at the 30S-50S ribosomal subunit interface and may play a role in the structure and function of the aminoacyl-tRNA binding site.</text>
</comment>
<comment type="similarity">
    <text evidence="1">Belongs to the bacterial ribosomal protein bL19 family.</text>
</comment>
<accession>A7HKS3</accession>